<reference key="1">
    <citation type="journal article" date="1999" name="Nature">
        <title>Sequence and analysis of chromosome 2 of the plant Arabidopsis thaliana.</title>
        <authorList>
            <person name="Lin X."/>
            <person name="Kaul S."/>
            <person name="Rounsley S.D."/>
            <person name="Shea T.P."/>
            <person name="Benito M.-I."/>
            <person name="Town C.D."/>
            <person name="Fujii C.Y."/>
            <person name="Mason T.M."/>
            <person name="Bowman C.L."/>
            <person name="Barnstead M.E."/>
            <person name="Feldblyum T.V."/>
            <person name="Buell C.R."/>
            <person name="Ketchum K.A."/>
            <person name="Lee J.J."/>
            <person name="Ronning C.M."/>
            <person name="Koo H.L."/>
            <person name="Moffat K.S."/>
            <person name="Cronin L.A."/>
            <person name="Shen M."/>
            <person name="Pai G."/>
            <person name="Van Aken S."/>
            <person name="Umayam L."/>
            <person name="Tallon L.J."/>
            <person name="Gill J.E."/>
            <person name="Adams M.D."/>
            <person name="Carrera A.J."/>
            <person name="Creasy T.H."/>
            <person name="Goodman H.M."/>
            <person name="Somerville C.R."/>
            <person name="Copenhaver G.P."/>
            <person name="Preuss D."/>
            <person name="Nierman W.C."/>
            <person name="White O."/>
            <person name="Eisen J.A."/>
            <person name="Salzberg S.L."/>
            <person name="Fraser C.M."/>
            <person name="Venter J.C."/>
        </authorList>
    </citation>
    <scope>NUCLEOTIDE SEQUENCE [LARGE SCALE GENOMIC DNA]</scope>
    <source>
        <strain>cv. Columbia</strain>
    </source>
</reference>
<reference key="2">
    <citation type="journal article" date="2017" name="Plant J.">
        <title>Araport11: a complete reannotation of the Arabidopsis thaliana reference genome.</title>
        <authorList>
            <person name="Cheng C.Y."/>
            <person name="Krishnakumar V."/>
            <person name="Chan A.P."/>
            <person name="Thibaud-Nissen F."/>
            <person name="Schobel S."/>
            <person name="Town C.D."/>
        </authorList>
    </citation>
    <scope>GENOME REANNOTATION</scope>
    <source>
        <strain>cv. Columbia</strain>
    </source>
</reference>
<reference key="3">
    <citation type="journal article" date="2003" name="Science">
        <title>Empirical analysis of transcriptional activity in the Arabidopsis genome.</title>
        <authorList>
            <person name="Yamada K."/>
            <person name="Lim J."/>
            <person name="Dale J.M."/>
            <person name="Chen H."/>
            <person name="Shinn P."/>
            <person name="Palm C.J."/>
            <person name="Southwick A.M."/>
            <person name="Wu H.C."/>
            <person name="Kim C.J."/>
            <person name="Nguyen M."/>
            <person name="Pham P.K."/>
            <person name="Cheuk R.F."/>
            <person name="Karlin-Newmann G."/>
            <person name="Liu S.X."/>
            <person name="Lam B."/>
            <person name="Sakano H."/>
            <person name="Wu T."/>
            <person name="Yu G."/>
            <person name="Miranda M."/>
            <person name="Quach H.L."/>
            <person name="Tripp M."/>
            <person name="Chang C.H."/>
            <person name="Lee J.M."/>
            <person name="Toriumi M.J."/>
            <person name="Chan M.M."/>
            <person name="Tang C.C."/>
            <person name="Onodera C.S."/>
            <person name="Deng J.M."/>
            <person name="Akiyama K."/>
            <person name="Ansari Y."/>
            <person name="Arakawa T."/>
            <person name="Banh J."/>
            <person name="Banno F."/>
            <person name="Bowser L."/>
            <person name="Brooks S.Y."/>
            <person name="Carninci P."/>
            <person name="Chao Q."/>
            <person name="Choy N."/>
            <person name="Enju A."/>
            <person name="Goldsmith A.D."/>
            <person name="Gurjal M."/>
            <person name="Hansen N.F."/>
            <person name="Hayashizaki Y."/>
            <person name="Johnson-Hopson C."/>
            <person name="Hsuan V.W."/>
            <person name="Iida K."/>
            <person name="Karnes M."/>
            <person name="Khan S."/>
            <person name="Koesema E."/>
            <person name="Ishida J."/>
            <person name="Jiang P.X."/>
            <person name="Jones T."/>
            <person name="Kawai J."/>
            <person name="Kamiya A."/>
            <person name="Meyers C."/>
            <person name="Nakajima M."/>
            <person name="Narusaka M."/>
            <person name="Seki M."/>
            <person name="Sakurai T."/>
            <person name="Satou M."/>
            <person name="Tamse R."/>
            <person name="Vaysberg M."/>
            <person name="Wallender E.K."/>
            <person name="Wong C."/>
            <person name="Yamamura Y."/>
            <person name="Yuan S."/>
            <person name="Shinozaki K."/>
            <person name="Davis R.W."/>
            <person name="Theologis A."/>
            <person name="Ecker J.R."/>
        </authorList>
    </citation>
    <scope>NUCLEOTIDE SEQUENCE [LARGE SCALE MRNA]</scope>
    <source>
        <strain>cv. Columbia</strain>
    </source>
</reference>
<accession>O64628</accession>
<proteinExistence type="evidence at transcript level"/>
<organism>
    <name type="scientific">Arabidopsis thaliana</name>
    <name type="common">Mouse-ear cress</name>
    <dbReference type="NCBI Taxonomy" id="3702"/>
    <lineage>
        <taxon>Eukaryota</taxon>
        <taxon>Viridiplantae</taxon>
        <taxon>Streptophyta</taxon>
        <taxon>Embryophyta</taxon>
        <taxon>Tracheophyta</taxon>
        <taxon>Spermatophyta</taxon>
        <taxon>Magnoliopsida</taxon>
        <taxon>eudicotyledons</taxon>
        <taxon>Gunneridae</taxon>
        <taxon>Pentapetalae</taxon>
        <taxon>rosids</taxon>
        <taxon>malvids</taxon>
        <taxon>Brassicales</taxon>
        <taxon>Brassicaceae</taxon>
        <taxon>Camelineae</taxon>
        <taxon>Arabidopsis</taxon>
    </lineage>
</organism>
<feature type="chain" id="PRO_0000120169" description="Thioredoxin domain-containing protein 9 homolog">
    <location>
        <begin position="1"/>
        <end position="211"/>
    </location>
</feature>
<feature type="domain" description="Thioredoxin">
    <location>
        <begin position="68"/>
        <end position="178"/>
    </location>
</feature>
<feature type="region of interest" description="Disordered" evidence="1">
    <location>
        <begin position="184"/>
        <end position="211"/>
    </location>
</feature>
<feature type="compositionally biased region" description="Polar residues" evidence="1">
    <location>
        <begin position="184"/>
        <end position="203"/>
    </location>
</feature>
<sequence length="211" mass="24451">MANPIQEILEKQVLTVAKAMEDKIDDEIASLEKLDEDDLEVLRERRLKQMKKMAEKKKRWISLGHGEYSEIHSEKDFFSVVKASERVVCHFYRENWPCKVMDKHMSILAKQHIETRFVKIQAEKSPFLAERLKIVVLPTLALIKNTKVDDYVVGFNELGGKDDFSTEDLEERIARAQVIHYDGESSSLKPKSTTQVRRNVRQSARSDSDSE</sequence>
<dbReference type="EMBL" id="AC003673">
    <property type="protein sequence ID" value="AAM14890.1"/>
    <property type="molecule type" value="Genomic_DNA"/>
</dbReference>
<dbReference type="EMBL" id="CP002685">
    <property type="protein sequence ID" value="AEC06836.1"/>
    <property type="molecule type" value="Genomic_DNA"/>
</dbReference>
<dbReference type="EMBL" id="BT005230">
    <property type="protein sequence ID" value="AAO63294.1"/>
    <property type="molecule type" value="mRNA"/>
</dbReference>
<dbReference type="PIR" id="T01627">
    <property type="entry name" value="T01627"/>
</dbReference>
<dbReference type="RefSeq" id="NP_179489.1">
    <property type="nucleotide sequence ID" value="NM_127456.4"/>
</dbReference>
<dbReference type="SMR" id="O64628"/>
<dbReference type="FunCoup" id="O64628">
    <property type="interactions" value="3502"/>
</dbReference>
<dbReference type="STRING" id="3702.O64628"/>
<dbReference type="PaxDb" id="3702-AT2G18990.1"/>
<dbReference type="ProteomicsDB" id="242587"/>
<dbReference type="EnsemblPlants" id="AT2G18990.1">
    <property type="protein sequence ID" value="AT2G18990.1"/>
    <property type="gene ID" value="AT2G18990"/>
</dbReference>
<dbReference type="GeneID" id="816416"/>
<dbReference type="Gramene" id="AT2G18990.1">
    <property type="protein sequence ID" value="AT2G18990.1"/>
    <property type="gene ID" value="AT2G18990"/>
</dbReference>
<dbReference type="KEGG" id="ath:AT2G18990"/>
<dbReference type="Araport" id="AT2G18990"/>
<dbReference type="TAIR" id="AT2G18990">
    <property type="gene designation" value="TXND9"/>
</dbReference>
<dbReference type="eggNOG" id="KOG1672">
    <property type="taxonomic scope" value="Eukaryota"/>
</dbReference>
<dbReference type="HOGENOM" id="CLU_072378_2_0_1"/>
<dbReference type="InParanoid" id="O64628"/>
<dbReference type="OMA" id="CVIAFID"/>
<dbReference type="OrthoDB" id="10257948at2759"/>
<dbReference type="PhylomeDB" id="O64628"/>
<dbReference type="PRO" id="PR:O64628"/>
<dbReference type="Proteomes" id="UP000006548">
    <property type="component" value="Chromosome 2"/>
</dbReference>
<dbReference type="ExpressionAtlas" id="O64628">
    <property type="expression patterns" value="baseline and differential"/>
</dbReference>
<dbReference type="CDD" id="cd02989">
    <property type="entry name" value="Phd_like_TxnDC9"/>
    <property type="match status" value="1"/>
</dbReference>
<dbReference type="Gene3D" id="3.40.30.10">
    <property type="entry name" value="Glutaredoxin"/>
    <property type="match status" value="1"/>
</dbReference>
<dbReference type="InterPro" id="IPR036249">
    <property type="entry name" value="Thioredoxin-like_sf"/>
</dbReference>
<dbReference type="InterPro" id="IPR013766">
    <property type="entry name" value="Thioredoxin_domain"/>
</dbReference>
<dbReference type="PANTHER" id="PTHR21148">
    <property type="entry name" value="THIOREDOXIN DOMAIN-CONTAINING PROTEIN 9"/>
    <property type="match status" value="1"/>
</dbReference>
<dbReference type="Pfam" id="PF00085">
    <property type="entry name" value="Thioredoxin"/>
    <property type="match status" value="1"/>
</dbReference>
<dbReference type="SUPFAM" id="SSF52833">
    <property type="entry name" value="Thioredoxin-like"/>
    <property type="match status" value="1"/>
</dbReference>
<keyword id="KW-1185">Reference proteome</keyword>
<protein>
    <recommendedName>
        <fullName>Thioredoxin domain-containing protein 9 homolog</fullName>
    </recommendedName>
</protein>
<name>TXND9_ARATH</name>
<gene>
    <name type="ordered locus">At2g18990</name>
    <name type="ORF">F19F24.19</name>
</gene>
<evidence type="ECO:0000256" key="1">
    <source>
        <dbReference type="SAM" id="MobiDB-lite"/>
    </source>
</evidence>